<accession>Q5L3U8</accession>
<feature type="chain" id="PRO_0000181549" description="Large ribosomal subunit protein bL25">
    <location>
        <begin position="1"/>
        <end position="210"/>
    </location>
</feature>
<feature type="region of interest" description="Disordered" evidence="2">
    <location>
        <begin position="175"/>
        <end position="210"/>
    </location>
</feature>
<feature type="compositionally biased region" description="Basic and acidic residues" evidence="2">
    <location>
        <begin position="201"/>
        <end position="210"/>
    </location>
</feature>
<name>RL25_GEOKA</name>
<reference key="1">
    <citation type="journal article" date="2004" name="Nucleic Acids Res.">
        <title>Thermoadaptation trait revealed by the genome sequence of thermophilic Geobacillus kaustophilus.</title>
        <authorList>
            <person name="Takami H."/>
            <person name="Takaki Y."/>
            <person name="Chee G.-J."/>
            <person name="Nishi S."/>
            <person name="Shimamura S."/>
            <person name="Suzuki H."/>
            <person name="Matsui S."/>
            <person name="Uchiyama I."/>
        </authorList>
    </citation>
    <scope>NUCLEOTIDE SEQUENCE [LARGE SCALE GENOMIC DNA]</scope>
    <source>
        <strain>HTA426</strain>
    </source>
</reference>
<protein>
    <recommendedName>
        <fullName evidence="1">Large ribosomal subunit protein bL25</fullName>
    </recommendedName>
    <alternativeName>
        <fullName evidence="3">50S ribosomal protein L25</fullName>
    </alternativeName>
    <alternativeName>
        <fullName evidence="1">General stress protein CTC</fullName>
    </alternativeName>
</protein>
<proteinExistence type="inferred from homology"/>
<dbReference type="EMBL" id="BA000043">
    <property type="protein sequence ID" value="BAD74330.1"/>
    <property type="molecule type" value="Genomic_DNA"/>
</dbReference>
<dbReference type="RefSeq" id="WP_011229560.1">
    <property type="nucleotide sequence ID" value="NC_006510.1"/>
</dbReference>
<dbReference type="SMR" id="Q5L3U8"/>
<dbReference type="STRING" id="235909.GK0045"/>
<dbReference type="KEGG" id="gka:GK0045"/>
<dbReference type="eggNOG" id="COG1825">
    <property type="taxonomic scope" value="Bacteria"/>
</dbReference>
<dbReference type="HOGENOM" id="CLU_075939_2_0_9"/>
<dbReference type="Proteomes" id="UP000001172">
    <property type="component" value="Chromosome"/>
</dbReference>
<dbReference type="GO" id="GO:0022625">
    <property type="term" value="C:cytosolic large ribosomal subunit"/>
    <property type="evidence" value="ECO:0007669"/>
    <property type="project" value="TreeGrafter"/>
</dbReference>
<dbReference type="GO" id="GO:0008097">
    <property type="term" value="F:5S rRNA binding"/>
    <property type="evidence" value="ECO:0007669"/>
    <property type="project" value="InterPro"/>
</dbReference>
<dbReference type="GO" id="GO:0003735">
    <property type="term" value="F:structural constituent of ribosome"/>
    <property type="evidence" value="ECO:0007669"/>
    <property type="project" value="InterPro"/>
</dbReference>
<dbReference type="GO" id="GO:0006412">
    <property type="term" value="P:translation"/>
    <property type="evidence" value="ECO:0007669"/>
    <property type="project" value="UniProtKB-UniRule"/>
</dbReference>
<dbReference type="CDD" id="cd00495">
    <property type="entry name" value="Ribosomal_L25_TL5_CTC"/>
    <property type="match status" value="1"/>
</dbReference>
<dbReference type="Gene3D" id="2.170.120.20">
    <property type="entry name" value="Ribosomal protein L25, beta domain"/>
    <property type="match status" value="1"/>
</dbReference>
<dbReference type="Gene3D" id="2.40.240.10">
    <property type="entry name" value="Ribosomal Protein L25, Chain P"/>
    <property type="match status" value="1"/>
</dbReference>
<dbReference type="HAMAP" id="MF_01334">
    <property type="entry name" value="Ribosomal_bL25_CTC"/>
    <property type="match status" value="1"/>
</dbReference>
<dbReference type="InterPro" id="IPR020056">
    <property type="entry name" value="Rbsml_bL25/Gln-tRNA_synth_N"/>
</dbReference>
<dbReference type="InterPro" id="IPR011035">
    <property type="entry name" value="Ribosomal_bL25/Gln-tRNA_synth"/>
</dbReference>
<dbReference type="InterPro" id="IPR020057">
    <property type="entry name" value="Ribosomal_bL25_b-dom"/>
</dbReference>
<dbReference type="InterPro" id="IPR037121">
    <property type="entry name" value="Ribosomal_bL25_C"/>
</dbReference>
<dbReference type="InterPro" id="IPR001021">
    <property type="entry name" value="Ribosomal_bL25_long"/>
</dbReference>
<dbReference type="InterPro" id="IPR029751">
    <property type="entry name" value="Ribosomal_L25_dom"/>
</dbReference>
<dbReference type="InterPro" id="IPR020930">
    <property type="entry name" value="Ribosomal_uL5_bac-type"/>
</dbReference>
<dbReference type="NCBIfam" id="TIGR00731">
    <property type="entry name" value="bL25_bact_ctc"/>
    <property type="match status" value="1"/>
</dbReference>
<dbReference type="NCBIfam" id="NF004133">
    <property type="entry name" value="PRK05618.2-4"/>
    <property type="match status" value="1"/>
</dbReference>
<dbReference type="PANTHER" id="PTHR33284">
    <property type="entry name" value="RIBOSOMAL PROTEIN L25/GLN-TRNA SYNTHETASE, ANTI-CODON-BINDING DOMAIN-CONTAINING PROTEIN"/>
    <property type="match status" value="1"/>
</dbReference>
<dbReference type="PANTHER" id="PTHR33284:SF1">
    <property type="entry name" value="RIBOSOMAL PROTEIN L25_GLN-TRNA SYNTHETASE, ANTI-CODON-BINDING DOMAIN-CONTAINING PROTEIN"/>
    <property type="match status" value="1"/>
</dbReference>
<dbReference type="Pfam" id="PF01386">
    <property type="entry name" value="Ribosomal_L25p"/>
    <property type="match status" value="1"/>
</dbReference>
<dbReference type="Pfam" id="PF14693">
    <property type="entry name" value="Ribosomal_TL5_C"/>
    <property type="match status" value="1"/>
</dbReference>
<dbReference type="SUPFAM" id="SSF50715">
    <property type="entry name" value="Ribosomal protein L25-like"/>
    <property type="match status" value="1"/>
</dbReference>
<sequence length="210" mass="22916">MAIVLEAKERADKKRSTLHRIRSQGGIPAILYGKKVENKMIFVSTAELEKALREGGRTSLLTLKVGGEEHSVLLRELQRDPLRGHLLHADFQAVDMSTEVDIDVEVRLVGEAPGVKDGGVLQQNLHELSIRVLPANIPPVIEVDISGLQVGDTVTVGDVKTDGKFEINHEPSEVIATILPPQQEEEIDSGEQQEAGQPDAAEGRETTPEE</sequence>
<comment type="function">
    <text evidence="1">This is one of the proteins that binds to the 5S RNA in the ribosome where it forms part of the central protuberance.</text>
</comment>
<comment type="subunit">
    <text evidence="1">Part of the 50S ribosomal subunit; part of the 5S rRNA/L5/L18/L25 subcomplex. Contacts the 5S rRNA. Binds to the 5S rRNA independently of L5 and L18.</text>
</comment>
<comment type="similarity">
    <text evidence="1">Belongs to the bacterial ribosomal protein bL25 family. CTC subfamily.</text>
</comment>
<gene>
    <name evidence="1" type="primary">rplY</name>
    <name evidence="1" type="synonym">ctc</name>
    <name type="ordered locus">GK0045</name>
</gene>
<evidence type="ECO:0000255" key="1">
    <source>
        <dbReference type="HAMAP-Rule" id="MF_01334"/>
    </source>
</evidence>
<evidence type="ECO:0000256" key="2">
    <source>
        <dbReference type="SAM" id="MobiDB-lite"/>
    </source>
</evidence>
<evidence type="ECO:0000305" key="3"/>
<organism>
    <name type="scientific">Geobacillus kaustophilus (strain HTA426)</name>
    <dbReference type="NCBI Taxonomy" id="235909"/>
    <lineage>
        <taxon>Bacteria</taxon>
        <taxon>Bacillati</taxon>
        <taxon>Bacillota</taxon>
        <taxon>Bacilli</taxon>
        <taxon>Bacillales</taxon>
        <taxon>Anoxybacillaceae</taxon>
        <taxon>Geobacillus</taxon>
        <taxon>Geobacillus thermoleovorans group</taxon>
    </lineage>
</organism>
<keyword id="KW-1185">Reference proteome</keyword>
<keyword id="KW-0687">Ribonucleoprotein</keyword>
<keyword id="KW-0689">Ribosomal protein</keyword>
<keyword id="KW-0694">RNA-binding</keyword>
<keyword id="KW-0699">rRNA-binding</keyword>